<feature type="chain" id="PRO_0000272811" description="Large ribosomal subunit protein uL23">
    <location>
        <begin position="1"/>
        <end position="116"/>
    </location>
</feature>
<reference key="1">
    <citation type="journal article" date="2010" name="Appl. Environ. Microbiol.">
        <title>The genome sequence of Psychrobacter arcticus 273-4, a psychroactive Siberian permafrost bacterium, reveals mechanisms for adaptation to low-temperature growth.</title>
        <authorList>
            <person name="Ayala-del-Rio H.L."/>
            <person name="Chain P.S."/>
            <person name="Grzymski J.J."/>
            <person name="Ponder M.A."/>
            <person name="Ivanova N."/>
            <person name="Bergholz P.W."/>
            <person name="Di Bartolo G."/>
            <person name="Hauser L."/>
            <person name="Land M."/>
            <person name="Bakermans C."/>
            <person name="Rodrigues D."/>
            <person name="Klappenbach J."/>
            <person name="Zarka D."/>
            <person name="Larimer F."/>
            <person name="Richardson P."/>
            <person name="Murray A."/>
            <person name="Thomashow M."/>
            <person name="Tiedje J.M."/>
        </authorList>
    </citation>
    <scope>NUCLEOTIDE SEQUENCE [LARGE SCALE GENOMIC DNA]</scope>
    <source>
        <strain>DSM 17307 / VKM B-2377 / 273-4</strain>
    </source>
</reference>
<evidence type="ECO:0000255" key="1">
    <source>
        <dbReference type="HAMAP-Rule" id="MF_01369"/>
    </source>
</evidence>
<evidence type="ECO:0000305" key="2"/>
<name>RL23_PSYA2</name>
<dbReference type="EMBL" id="CP000082">
    <property type="protein sequence ID" value="AAZ18354.1"/>
    <property type="molecule type" value="Genomic_DNA"/>
</dbReference>
<dbReference type="RefSeq" id="WP_011279789.1">
    <property type="nucleotide sequence ID" value="NC_007204.1"/>
</dbReference>
<dbReference type="SMR" id="Q4FUF4"/>
<dbReference type="STRING" id="259536.Psyc_0491"/>
<dbReference type="KEGG" id="par:Psyc_0491"/>
<dbReference type="eggNOG" id="COG0089">
    <property type="taxonomic scope" value="Bacteria"/>
</dbReference>
<dbReference type="HOGENOM" id="CLU_037562_3_1_6"/>
<dbReference type="OrthoDB" id="9793353at2"/>
<dbReference type="Proteomes" id="UP000000546">
    <property type="component" value="Chromosome"/>
</dbReference>
<dbReference type="GO" id="GO:1990904">
    <property type="term" value="C:ribonucleoprotein complex"/>
    <property type="evidence" value="ECO:0007669"/>
    <property type="project" value="UniProtKB-KW"/>
</dbReference>
<dbReference type="GO" id="GO:0005840">
    <property type="term" value="C:ribosome"/>
    <property type="evidence" value="ECO:0007669"/>
    <property type="project" value="UniProtKB-KW"/>
</dbReference>
<dbReference type="GO" id="GO:0019843">
    <property type="term" value="F:rRNA binding"/>
    <property type="evidence" value="ECO:0007669"/>
    <property type="project" value="UniProtKB-UniRule"/>
</dbReference>
<dbReference type="GO" id="GO:0003735">
    <property type="term" value="F:structural constituent of ribosome"/>
    <property type="evidence" value="ECO:0007669"/>
    <property type="project" value="InterPro"/>
</dbReference>
<dbReference type="GO" id="GO:0006412">
    <property type="term" value="P:translation"/>
    <property type="evidence" value="ECO:0007669"/>
    <property type="project" value="UniProtKB-UniRule"/>
</dbReference>
<dbReference type="FunFam" id="3.30.70.330:FF:000001">
    <property type="entry name" value="50S ribosomal protein L23"/>
    <property type="match status" value="1"/>
</dbReference>
<dbReference type="Gene3D" id="3.30.70.330">
    <property type="match status" value="1"/>
</dbReference>
<dbReference type="HAMAP" id="MF_01369_B">
    <property type="entry name" value="Ribosomal_uL23_B"/>
    <property type="match status" value="1"/>
</dbReference>
<dbReference type="InterPro" id="IPR012677">
    <property type="entry name" value="Nucleotide-bd_a/b_plait_sf"/>
</dbReference>
<dbReference type="InterPro" id="IPR013025">
    <property type="entry name" value="Ribosomal_uL23-like"/>
</dbReference>
<dbReference type="InterPro" id="IPR012678">
    <property type="entry name" value="Ribosomal_uL23/eL15/eS24_sf"/>
</dbReference>
<dbReference type="NCBIfam" id="NF004359">
    <property type="entry name" value="PRK05738.1-3"/>
    <property type="match status" value="1"/>
</dbReference>
<dbReference type="NCBIfam" id="NF004363">
    <property type="entry name" value="PRK05738.2-4"/>
    <property type="match status" value="1"/>
</dbReference>
<dbReference type="PANTHER" id="PTHR11620">
    <property type="entry name" value="60S RIBOSOMAL PROTEIN L23A"/>
    <property type="match status" value="1"/>
</dbReference>
<dbReference type="Pfam" id="PF00276">
    <property type="entry name" value="Ribosomal_L23"/>
    <property type="match status" value="1"/>
</dbReference>
<dbReference type="SUPFAM" id="SSF54189">
    <property type="entry name" value="Ribosomal proteins S24e, L23 and L15e"/>
    <property type="match status" value="1"/>
</dbReference>
<organism>
    <name type="scientific">Psychrobacter arcticus (strain DSM 17307 / VKM B-2377 / 273-4)</name>
    <dbReference type="NCBI Taxonomy" id="259536"/>
    <lineage>
        <taxon>Bacteria</taxon>
        <taxon>Pseudomonadati</taxon>
        <taxon>Pseudomonadota</taxon>
        <taxon>Gammaproteobacteria</taxon>
        <taxon>Moraxellales</taxon>
        <taxon>Moraxellaceae</taxon>
        <taxon>Psychrobacter</taxon>
    </lineage>
</organism>
<keyword id="KW-1185">Reference proteome</keyword>
<keyword id="KW-0687">Ribonucleoprotein</keyword>
<keyword id="KW-0689">Ribosomal protein</keyword>
<keyword id="KW-0694">RNA-binding</keyword>
<keyword id="KW-0699">rRNA-binding</keyword>
<gene>
    <name evidence="1" type="primary">rplW</name>
    <name type="ordered locus">Psyc_0491</name>
</gene>
<accession>Q4FUF4</accession>
<proteinExistence type="inferred from homology"/>
<protein>
    <recommendedName>
        <fullName evidence="1">Large ribosomal subunit protein uL23</fullName>
    </recommendedName>
    <alternativeName>
        <fullName evidence="2">50S ribosomal protein L23</fullName>
    </alternativeName>
</protein>
<comment type="function">
    <text evidence="1">One of the early assembly proteins it binds 23S rRNA. One of the proteins that surrounds the polypeptide exit tunnel on the outside of the ribosome. Forms the main docking site for trigger factor binding to the ribosome.</text>
</comment>
<comment type="subunit">
    <text evidence="1">Part of the 50S ribosomal subunit. Contacts protein L29, and trigger factor when it is bound to the ribosome.</text>
</comment>
<comment type="similarity">
    <text evidence="1">Belongs to the universal ribosomal protein uL23 family.</text>
</comment>
<sequence length="116" mass="12793">MNNARLYQILRGPVFSEKSQMLGDSLGVQVFKIDSKATKLEVKKAVEMMFEGVEVLKVNTLNVKGKTKRFGKSIGRRNDYKKAYVTLKAGQDVQMADAGEEVANTTASTSETANNE</sequence>